<protein>
    <recommendedName>
        <fullName evidence="1">3-hydroxyacyl-[acyl-carrier-protein] dehydratase FabZ</fullName>
        <ecNumber evidence="1">4.2.1.59</ecNumber>
    </recommendedName>
    <alternativeName>
        <fullName evidence="1">(3R)-hydroxymyristoyl-[acyl-carrier-protein] dehydratase</fullName>
        <shortName evidence="1">(3R)-hydroxymyristoyl-ACP dehydrase</shortName>
    </alternativeName>
    <alternativeName>
        <fullName evidence="1">Beta-hydroxyacyl-ACP dehydratase</fullName>
    </alternativeName>
</protein>
<comment type="function">
    <text evidence="1">Involved in unsaturated fatty acids biosynthesis. Catalyzes the dehydration of short chain beta-hydroxyacyl-ACPs and long chain saturated and unsaturated beta-hydroxyacyl-ACPs.</text>
</comment>
<comment type="catalytic activity">
    <reaction evidence="1">
        <text>a (3R)-hydroxyacyl-[ACP] = a (2E)-enoyl-[ACP] + H2O</text>
        <dbReference type="Rhea" id="RHEA:13097"/>
        <dbReference type="Rhea" id="RHEA-COMP:9925"/>
        <dbReference type="Rhea" id="RHEA-COMP:9945"/>
        <dbReference type="ChEBI" id="CHEBI:15377"/>
        <dbReference type="ChEBI" id="CHEBI:78784"/>
        <dbReference type="ChEBI" id="CHEBI:78827"/>
        <dbReference type="EC" id="4.2.1.59"/>
    </reaction>
</comment>
<comment type="subcellular location">
    <subcellularLocation>
        <location evidence="1">Cytoplasm</location>
    </subcellularLocation>
</comment>
<comment type="similarity">
    <text evidence="1">Belongs to the thioester dehydratase family. FabZ subfamily.</text>
</comment>
<reference key="1">
    <citation type="submission" date="2003-03" db="EMBL/GenBank/DDBJ databases">
        <title>The complete genome sequence of Neisseria gonorrhoeae.</title>
        <authorList>
            <person name="Lewis L.A."/>
            <person name="Gillaspy A.F."/>
            <person name="McLaughlin R.E."/>
            <person name="Gipson M."/>
            <person name="Ducey T.F."/>
            <person name="Ownbey T."/>
            <person name="Hartman K."/>
            <person name="Nydick C."/>
            <person name="Carson M.B."/>
            <person name="Vaughn J."/>
            <person name="Thomson C."/>
            <person name="Song L."/>
            <person name="Lin S."/>
            <person name="Yuan X."/>
            <person name="Najar F."/>
            <person name="Zhan M."/>
            <person name="Ren Q."/>
            <person name="Zhu H."/>
            <person name="Qi S."/>
            <person name="Kenton S.M."/>
            <person name="Lai H."/>
            <person name="White J.D."/>
            <person name="Clifton S."/>
            <person name="Roe B.A."/>
            <person name="Dyer D.W."/>
        </authorList>
    </citation>
    <scope>NUCLEOTIDE SEQUENCE [LARGE SCALE GENOMIC DNA]</scope>
    <source>
        <strain>ATCC 700825 / FA 1090</strain>
    </source>
</reference>
<keyword id="KW-0963">Cytoplasm</keyword>
<keyword id="KW-0441">Lipid A biosynthesis</keyword>
<keyword id="KW-0444">Lipid biosynthesis</keyword>
<keyword id="KW-0443">Lipid metabolism</keyword>
<keyword id="KW-0456">Lyase</keyword>
<keyword id="KW-1185">Reference proteome</keyword>
<dbReference type="EC" id="4.2.1.59" evidence="1"/>
<dbReference type="EMBL" id="AE004969">
    <property type="protein sequence ID" value="AAW90422.1"/>
    <property type="molecule type" value="Genomic_DNA"/>
</dbReference>
<dbReference type="RefSeq" id="WP_002231544.1">
    <property type="nucleotide sequence ID" value="NC_002946.2"/>
</dbReference>
<dbReference type="RefSeq" id="YP_208834.1">
    <property type="nucleotide sequence ID" value="NC_002946.2"/>
</dbReference>
<dbReference type="SMR" id="Q5F5W5"/>
<dbReference type="STRING" id="242231.NGO_1804"/>
<dbReference type="GeneID" id="93387257"/>
<dbReference type="KEGG" id="ngo:NGO_1804"/>
<dbReference type="PATRIC" id="fig|242231.10.peg.2164"/>
<dbReference type="HOGENOM" id="CLU_078912_1_0_4"/>
<dbReference type="Proteomes" id="UP000000535">
    <property type="component" value="Chromosome"/>
</dbReference>
<dbReference type="GO" id="GO:0005737">
    <property type="term" value="C:cytoplasm"/>
    <property type="evidence" value="ECO:0007669"/>
    <property type="project" value="UniProtKB-SubCell"/>
</dbReference>
<dbReference type="GO" id="GO:0016020">
    <property type="term" value="C:membrane"/>
    <property type="evidence" value="ECO:0007669"/>
    <property type="project" value="GOC"/>
</dbReference>
<dbReference type="GO" id="GO:0019171">
    <property type="term" value="F:(3R)-hydroxyacyl-[acyl-carrier-protein] dehydratase activity"/>
    <property type="evidence" value="ECO:0007669"/>
    <property type="project" value="UniProtKB-EC"/>
</dbReference>
<dbReference type="GO" id="GO:0006633">
    <property type="term" value="P:fatty acid biosynthetic process"/>
    <property type="evidence" value="ECO:0007669"/>
    <property type="project" value="UniProtKB-UniRule"/>
</dbReference>
<dbReference type="GO" id="GO:0009245">
    <property type="term" value="P:lipid A biosynthetic process"/>
    <property type="evidence" value="ECO:0007669"/>
    <property type="project" value="UniProtKB-UniRule"/>
</dbReference>
<dbReference type="CDD" id="cd01288">
    <property type="entry name" value="FabZ"/>
    <property type="match status" value="1"/>
</dbReference>
<dbReference type="FunFam" id="3.10.129.10:FF:000001">
    <property type="entry name" value="3-hydroxyacyl-[acyl-carrier-protein] dehydratase FabZ"/>
    <property type="match status" value="1"/>
</dbReference>
<dbReference type="Gene3D" id="3.10.129.10">
    <property type="entry name" value="Hotdog Thioesterase"/>
    <property type="match status" value="1"/>
</dbReference>
<dbReference type="HAMAP" id="MF_00406">
    <property type="entry name" value="FabZ"/>
    <property type="match status" value="1"/>
</dbReference>
<dbReference type="InterPro" id="IPR013114">
    <property type="entry name" value="FabA_FabZ"/>
</dbReference>
<dbReference type="InterPro" id="IPR010084">
    <property type="entry name" value="FabZ"/>
</dbReference>
<dbReference type="InterPro" id="IPR029069">
    <property type="entry name" value="HotDog_dom_sf"/>
</dbReference>
<dbReference type="NCBIfam" id="TIGR01750">
    <property type="entry name" value="fabZ"/>
    <property type="match status" value="1"/>
</dbReference>
<dbReference type="NCBIfam" id="NF000582">
    <property type="entry name" value="PRK00006.1"/>
    <property type="match status" value="1"/>
</dbReference>
<dbReference type="PANTHER" id="PTHR30272">
    <property type="entry name" value="3-HYDROXYACYL-[ACYL-CARRIER-PROTEIN] DEHYDRATASE"/>
    <property type="match status" value="1"/>
</dbReference>
<dbReference type="PANTHER" id="PTHR30272:SF1">
    <property type="entry name" value="3-HYDROXYACYL-[ACYL-CARRIER-PROTEIN] DEHYDRATASE"/>
    <property type="match status" value="1"/>
</dbReference>
<dbReference type="Pfam" id="PF07977">
    <property type="entry name" value="FabA"/>
    <property type="match status" value="1"/>
</dbReference>
<dbReference type="SUPFAM" id="SSF54637">
    <property type="entry name" value="Thioesterase/thiol ester dehydrase-isomerase"/>
    <property type="match status" value="1"/>
</dbReference>
<gene>
    <name evidence="1" type="primary">fabZ</name>
    <name type="ordered locus">NGO_1804</name>
</gene>
<name>FABZ_NEIG1</name>
<feature type="chain" id="PRO_0000230818" description="3-hydroxyacyl-[acyl-carrier-protein] dehydratase FabZ">
    <location>
        <begin position="1"/>
        <end position="149"/>
    </location>
</feature>
<feature type="active site" evidence="1">
    <location>
        <position position="53"/>
    </location>
</feature>
<evidence type="ECO:0000255" key="1">
    <source>
        <dbReference type="HAMAP-Rule" id="MF_00406"/>
    </source>
</evidence>
<sequence>MDVQLPIEAKDIQKLIPHRYPFLQLDRITAFEPMKTLTAIKNVTINEPQFQGHFPDLPVMPGVLIIEAMAQACGTLAILSEGGRKENEFFFFAGIDEARFKRQVIPGDQLVFEVELLTSRRGIGKFNAVAKVDGQVAVEAVIMCAKRVV</sequence>
<proteinExistence type="inferred from homology"/>
<organism>
    <name type="scientific">Neisseria gonorrhoeae (strain ATCC 700825 / FA 1090)</name>
    <dbReference type="NCBI Taxonomy" id="242231"/>
    <lineage>
        <taxon>Bacteria</taxon>
        <taxon>Pseudomonadati</taxon>
        <taxon>Pseudomonadota</taxon>
        <taxon>Betaproteobacteria</taxon>
        <taxon>Neisseriales</taxon>
        <taxon>Neisseriaceae</taxon>
        <taxon>Neisseria</taxon>
    </lineage>
</organism>
<accession>Q5F5W5</accession>